<protein>
    <recommendedName>
        <fullName evidence="4">Ribosome biogenesis protein NOP53</fullName>
    </recommendedName>
</protein>
<organism>
    <name type="scientific">Schizosaccharomyces pombe (strain 972 / ATCC 24843)</name>
    <name type="common">Fission yeast</name>
    <dbReference type="NCBI Taxonomy" id="284812"/>
    <lineage>
        <taxon>Eukaryota</taxon>
        <taxon>Fungi</taxon>
        <taxon>Dikarya</taxon>
        <taxon>Ascomycota</taxon>
        <taxon>Taphrinomycotina</taxon>
        <taxon>Schizosaccharomycetes</taxon>
        <taxon>Schizosaccharomycetales</taxon>
        <taxon>Schizosaccharomycetaceae</taxon>
        <taxon>Schizosaccharomyces</taxon>
    </lineage>
</organism>
<dbReference type="EMBL" id="CU329670">
    <property type="protein sequence ID" value="CAB52719.1"/>
    <property type="molecule type" value="Genomic_DNA"/>
</dbReference>
<dbReference type="PIR" id="T38199">
    <property type="entry name" value="T38199"/>
</dbReference>
<dbReference type="RefSeq" id="NP_594732.1">
    <property type="nucleotide sequence ID" value="NM_001020160.2"/>
</dbReference>
<dbReference type="SMR" id="Q9UUI4"/>
<dbReference type="BioGRID" id="278176">
    <property type="interactions" value="24"/>
</dbReference>
<dbReference type="FunCoup" id="Q9UUI4">
    <property type="interactions" value="493"/>
</dbReference>
<dbReference type="STRING" id="284812.Q9UUI4"/>
<dbReference type="iPTMnet" id="Q9UUI4"/>
<dbReference type="PaxDb" id="4896-SPAC22F8.09.1"/>
<dbReference type="EnsemblFungi" id="SPAC22F8.09.1">
    <property type="protein sequence ID" value="SPAC22F8.09.1:pep"/>
    <property type="gene ID" value="SPAC22F8.09"/>
</dbReference>
<dbReference type="GeneID" id="2541680"/>
<dbReference type="KEGG" id="spo:2541680"/>
<dbReference type="PomBase" id="SPAC22F8.09">
    <property type="gene designation" value="rrp16"/>
</dbReference>
<dbReference type="VEuPathDB" id="FungiDB:SPAC22F8.09"/>
<dbReference type="eggNOG" id="KOG2823">
    <property type="taxonomic scope" value="Eukaryota"/>
</dbReference>
<dbReference type="HOGENOM" id="CLU_035888_1_0_1"/>
<dbReference type="InParanoid" id="Q9UUI4"/>
<dbReference type="OMA" id="TEKWTHK"/>
<dbReference type="PhylomeDB" id="Q9UUI4"/>
<dbReference type="PRO" id="PR:Q9UUI4"/>
<dbReference type="Proteomes" id="UP000002485">
    <property type="component" value="Chromosome I"/>
</dbReference>
<dbReference type="GO" id="GO:0005730">
    <property type="term" value="C:nucleolus"/>
    <property type="evidence" value="ECO:0000250"/>
    <property type="project" value="UniProtKB"/>
</dbReference>
<dbReference type="GO" id="GO:0005654">
    <property type="term" value="C:nucleoplasm"/>
    <property type="evidence" value="ECO:0000250"/>
    <property type="project" value="UniProtKB"/>
</dbReference>
<dbReference type="GO" id="GO:0008097">
    <property type="term" value="F:5S rRNA binding"/>
    <property type="evidence" value="ECO:0000318"/>
    <property type="project" value="GO_Central"/>
</dbReference>
<dbReference type="GO" id="GO:0000027">
    <property type="term" value="P:ribosomal large subunit assembly"/>
    <property type="evidence" value="ECO:0000250"/>
    <property type="project" value="UniProtKB"/>
</dbReference>
<dbReference type="GO" id="GO:0006364">
    <property type="term" value="P:rRNA processing"/>
    <property type="evidence" value="ECO:0000318"/>
    <property type="project" value="GO_Central"/>
</dbReference>
<dbReference type="InterPro" id="IPR011687">
    <property type="entry name" value="Nop53/GLTSCR2"/>
</dbReference>
<dbReference type="PANTHER" id="PTHR14211">
    <property type="entry name" value="GLIOMA SUPPRESSOR CANDIDATE REGION GENE 2"/>
    <property type="match status" value="1"/>
</dbReference>
<dbReference type="PANTHER" id="PTHR14211:SF7">
    <property type="entry name" value="RIBOSOME BIOGENESIS PROTEIN NOP53"/>
    <property type="match status" value="1"/>
</dbReference>
<dbReference type="Pfam" id="PF07767">
    <property type="entry name" value="Nop53"/>
    <property type="match status" value="1"/>
</dbReference>
<dbReference type="PIRSF" id="PIRSF017302">
    <property type="entry name" value="Gltscr2"/>
    <property type="match status" value="1"/>
</dbReference>
<feature type="chain" id="PRO_0000218964" description="Ribosome biogenesis protein NOP53">
    <location>
        <begin position="1"/>
        <end position="419"/>
    </location>
</feature>
<feature type="region of interest" description="Disordered" evidence="2">
    <location>
        <begin position="1"/>
        <end position="21"/>
    </location>
</feature>
<feature type="region of interest" description="Disordered" evidence="2">
    <location>
        <begin position="233"/>
        <end position="283"/>
    </location>
</feature>
<feature type="compositionally biased region" description="Basic and acidic residues" evidence="2">
    <location>
        <begin position="233"/>
        <end position="261"/>
    </location>
</feature>
<feature type="compositionally biased region" description="Basic residues" evidence="2">
    <location>
        <begin position="269"/>
        <end position="283"/>
    </location>
</feature>
<feature type="modified residue" description="Phosphoserine" evidence="3">
    <location>
        <position position="242"/>
    </location>
</feature>
<feature type="modified residue" description="Phosphoserine" evidence="3">
    <location>
        <position position="249"/>
    </location>
</feature>
<feature type="modified residue" description="Phosphoserine" evidence="3">
    <location>
        <position position="252"/>
    </location>
</feature>
<feature type="modified residue" description="Phosphoserine" evidence="3">
    <location>
        <position position="256"/>
    </location>
</feature>
<name>NOP53_SCHPO</name>
<comment type="function">
    <text evidence="1">May play a role in ribosome biogenesis.</text>
</comment>
<comment type="subcellular location">
    <subcellularLocation>
        <location evidence="1">Nucleus</location>
        <location evidence="1">Nucleolus</location>
    </subcellularLocation>
    <subcellularLocation>
        <location evidence="1">Nucleus</location>
        <location evidence="1">Nucleoplasm</location>
    </subcellularLocation>
</comment>
<comment type="similarity">
    <text evidence="4">Belongs to the NOP53 family.</text>
</comment>
<keyword id="KW-0539">Nucleus</keyword>
<keyword id="KW-0597">Phosphoprotein</keyword>
<keyword id="KW-1185">Reference proteome</keyword>
<keyword id="KW-0690">Ribosome biogenesis</keyword>
<evidence type="ECO:0000250" key="1">
    <source>
        <dbReference type="UniProtKB" id="Q12080"/>
    </source>
</evidence>
<evidence type="ECO:0000256" key="2">
    <source>
        <dbReference type="SAM" id="MobiDB-lite"/>
    </source>
</evidence>
<evidence type="ECO:0000269" key="3">
    <source>
    </source>
</evidence>
<evidence type="ECO:0000305" key="4"/>
<evidence type="ECO:0000312" key="5">
    <source>
        <dbReference type="PomBase" id="SPAC22F8.09"/>
    </source>
</evidence>
<accession>Q9UUI4</accession>
<gene>
    <name evidence="5" type="primary">rrp16</name>
    <name evidence="5" type="synonym">nop53</name>
    <name evidence="5" type="ORF">SPAC22F8.09</name>
</gene>
<proteinExistence type="evidence at protein level"/>
<reference key="1">
    <citation type="journal article" date="2002" name="Nature">
        <title>The genome sequence of Schizosaccharomyces pombe.</title>
        <authorList>
            <person name="Wood V."/>
            <person name="Gwilliam R."/>
            <person name="Rajandream M.A."/>
            <person name="Lyne M.H."/>
            <person name="Lyne R."/>
            <person name="Stewart A."/>
            <person name="Sgouros J.G."/>
            <person name="Peat N."/>
            <person name="Hayles J."/>
            <person name="Baker S.G."/>
            <person name="Basham D."/>
            <person name="Bowman S."/>
            <person name="Brooks K."/>
            <person name="Brown D."/>
            <person name="Brown S."/>
            <person name="Chillingworth T."/>
            <person name="Churcher C.M."/>
            <person name="Collins M."/>
            <person name="Connor R."/>
            <person name="Cronin A."/>
            <person name="Davis P."/>
            <person name="Feltwell T."/>
            <person name="Fraser A."/>
            <person name="Gentles S."/>
            <person name="Goble A."/>
            <person name="Hamlin N."/>
            <person name="Harris D.E."/>
            <person name="Hidalgo J."/>
            <person name="Hodgson G."/>
            <person name="Holroyd S."/>
            <person name="Hornsby T."/>
            <person name="Howarth S."/>
            <person name="Huckle E.J."/>
            <person name="Hunt S."/>
            <person name="Jagels K."/>
            <person name="James K.D."/>
            <person name="Jones L."/>
            <person name="Jones M."/>
            <person name="Leather S."/>
            <person name="McDonald S."/>
            <person name="McLean J."/>
            <person name="Mooney P."/>
            <person name="Moule S."/>
            <person name="Mungall K.L."/>
            <person name="Murphy L.D."/>
            <person name="Niblett D."/>
            <person name="Odell C."/>
            <person name="Oliver K."/>
            <person name="O'Neil S."/>
            <person name="Pearson D."/>
            <person name="Quail M.A."/>
            <person name="Rabbinowitsch E."/>
            <person name="Rutherford K.M."/>
            <person name="Rutter S."/>
            <person name="Saunders D."/>
            <person name="Seeger K."/>
            <person name="Sharp S."/>
            <person name="Skelton J."/>
            <person name="Simmonds M.N."/>
            <person name="Squares R."/>
            <person name="Squares S."/>
            <person name="Stevens K."/>
            <person name="Taylor K."/>
            <person name="Taylor R.G."/>
            <person name="Tivey A."/>
            <person name="Walsh S.V."/>
            <person name="Warren T."/>
            <person name="Whitehead S."/>
            <person name="Woodward J.R."/>
            <person name="Volckaert G."/>
            <person name="Aert R."/>
            <person name="Robben J."/>
            <person name="Grymonprez B."/>
            <person name="Weltjens I."/>
            <person name="Vanstreels E."/>
            <person name="Rieger M."/>
            <person name="Schaefer M."/>
            <person name="Mueller-Auer S."/>
            <person name="Gabel C."/>
            <person name="Fuchs M."/>
            <person name="Duesterhoeft A."/>
            <person name="Fritzc C."/>
            <person name="Holzer E."/>
            <person name="Moestl D."/>
            <person name="Hilbert H."/>
            <person name="Borzym K."/>
            <person name="Langer I."/>
            <person name="Beck A."/>
            <person name="Lehrach H."/>
            <person name="Reinhardt R."/>
            <person name="Pohl T.M."/>
            <person name="Eger P."/>
            <person name="Zimmermann W."/>
            <person name="Wedler H."/>
            <person name="Wambutt R."/>
            <person name="Purnelle B."/>
            <person name="Goffeau A."/>
            <person name="Cadieu E."/>
            <person name="Dreano S."/>
            <person name="Gloux S."/>
            <person name="Lelaure V."/>
            <person name="Mottier S."/>
            <person name="Galibert F."/>
            <person name="Aves S.J."/>
            <person name="Xiang Z."/>
            <person name="Hunt C."/>
            <person name="Moore K."/>
            <person name="Hurst S.M."/>
            <person name="Lucas M."/>
            <person name="Rochet M."/>
            <person name="Gaillardin C."/>
            <person name="Tallada V.A."/>
            <person name="Garzon A."/>
            <person name="Thode G."/>
            <person name="Daga R.R."/>
            <person name="Cruzado L."/>
            <person name="Jimenez J."/>
            <person name="Sanchez M."/>
            <person name="del Rey F."/>
            <person name="Benito J."/>
            <person name="Dominguez A."/>
            <person name="Revuelta J.L."/>
            <person name="Moreno S."/>
            <person name="Armstrong J."/>
            <person name="Forsburg S.L."/>
            <person name="Cerutti L."/>
            <person name="Lowe T."/>
            <person name="McCombie W.R."/>
            <person name="Paulsen I."/>
            <person name="Potashkin J."/>
            <person name="Shpakovski G.V."/>
            <person name="Ussery D."/>
            <person name="Barrell B.G."/>
            <person name="Nurse P."/>
        </authorList>
    </citation>
    <scope>NUCLEOTIDE SEQUENCE [LARGE SCALE GENOMIC DNA]</scope>
    <source>
        <strain>972 / ATCC 24843</strain>
    </source>
</reference>
<reference key="2">
    <citation type="journal article" date="2008" name="J. Proteome Res.">
        <title>Phosphoproteome analysis of fission yeast.</title>
        <authorList>
            <person name="Wilson-Grady J.T."/>
            <person name="Villen J."/>
            <person name="Gygi S.P."/>
        </authorList>
    </citation>
    <scope>PHOSPHORYLATION [LARGE SCALE ANALYSIS] AT SER-242; SER-249; SER-252 AND SER-256</scope>
    <scope>IDENTIFICATION BY MASS SPECTROMETRY</scope>
</reference>
<sequence length="419" mass="48130">MGIKERNAPSQYKQSSRKNKRAWRKNIDLEDIESGLEQTRDEEIKGGNVEHKPNDALFVIDTLGDDRIAKRSRKKIKPLKVDQILENKSSIEKVHSHLTNNSTESNKKGKIFSRKELNRLQALVYKNKDGLTATSAASELKNTKQPKESYDVWETNPTVTIPVKRPSTLSKLPESLTENNAKVPNVVIADPGMSYNPDAAAWMKLLDTKGSEELKKEQKRISELEEKERIQKKAFEDKGLVSDQDVNHSIDSDDQSEHEQAETPIPSSKNKRKTRSQRNKIRQRREEELRLLEQKKNEELLRTIDKAPAISKKLQQKDKAEKFSNKAVSSSTTEIKLKKKKFGKHRLPNNPLEIKLGDELTSSLRELKPEGNLFADRYLSLQQRAMVPPSLPVLKKSKYRAKIKEKYSHKDFHLQKNSI</sequence>